<feature type="chain" id="PRO_1000089221" description="Endoribonuclease YbeY">
    <location>
        <begin position="1"/>
        <end position="159"/>
    </location>
</feature>
<feature type="binding site" evidence="1">
    <location>
        <position position="125"/>
    </location>
    <ligand>
        <name>Zn(2+)</name>
        <dbReference type="ChEBI" id="CHEBI:29105"/>
        <note>catalytic</note>
    </ligand>
</feature>
<feature type="binding site" evidence="1">
    <location>
        <position position="129"/>
    </location>
    <ligand>
        <name>Zn(2+)</name>
        <dbReference type="ChEBI" id="CHEBI:29105"/>
        <note>catalytic</note>
    </ligand>
</feature>
<feature type="binding site" evidence="1">
    <location>
        <position position="135"/>
    </location>
    <ligand>
        <name>Zn(2+)</name>
        <dbReference type="ChEBI" id="CHEBI:29105"/>
        <note>catalytic</note>
    </ligand>
</feature>
<keyword id="KW-0963">Cytoplasm</keyword>
<keyword id="KW-0255">Endonuclease</keyword>
<keyword id="KW-0378">Hydrolase</keyword>
<keyword id="KW-0479">Metal-binding</keyword>
<keyword id="KW-0540">Nuclease</keyword>
<keyword id="KW-1185">Reference proteome</keyword>
<keyword id="KW-0690">Ribosome biogenesis</keyword>
<keyword id="KW-0698">rRNA processing</keyword>
<keyword id="KW-0862">Zinc</keyword>
<gene>
    <name evidence="1" type="primary">ybeY</name>
    <name type="ordered locus">Teth39_1367</name>
</gene>
<organism>
    <name type="scientific">Thermoanaerobacter pseudethanolicus (strain ATCC 33223 / 39E)</name>
    <name type="common">Clostridium thermohydrosulfuricum</name>
    <dbReference type="NCBI Taxonomy" id="340099"/>
    <lineage>
        <taxon>Bacteria</taxon>
        <taxon>Bacillati</taxon>
        <taxon>Bacillota</taxon>
        <taxon>Clostridia</taxon>
        <taxon>Thermoanaerobacterales</taxon>
        <taxon>Thermoanaerobacteraceae</taxon>
        <taxon>Thermoanaerobacter</taxon>
    </lineage>
</organism>
<protein>
    <recommendedName>
        <fullName evidence="1">Endoribonuclease YbeY</fullName>
        <ecNumber evidence="1">3.1.-.-</ecNumber>
    </recommendedName>
</protein>
<proteinExistence type="inferred from homology"/>
<evidence type="ECO:0000255" key="1">
    <source>
        <dbReference type="HAMAP-Rule" id="MF_00009"/>
    </source>
</evidence>
<comment type="function">
    <text evidence="1">Single strand-specific metallo-endoribonuclease involved in late-stage 70S ribosome quality control and in maturation of the 3' terminus of the 16S rRNA.</text>
</comment>
<comment type="cofactor">
    <cofactor evidence="1">
        <name>Zn(2+)</name>
        <dbReference type="ChEBI" id="CHEBI:29105"/>
    </cofactor>
    <text evidence="1">Binds 1 zinc ion.</text>
</comment>
<comment type="subcellular location">
    <subcellularLocation>
        <location evidence="1">Cytoplasm</location>
    </subcellularLocation>
</comment>
<comment type="similarity">
    <text evidence="1">Belongs to the endoribonuclease YbeY family.</text>
</comment>
<reference key="1">
    <citation type="submission" date="2008-01" db="EMBL/GenBank/DDBJ databases">
        <title>Complete sequence of Thermoanaerobacter pseudethanolicus 39E.</title>
        <authorList>
            <person name="Copeland A."/>
            <person name="Lucas S."/>
            <person name="Lapidus A."/>
            <person name="Barry K."/>
            <person name="Glavina del Rio T."/>
            <person name="Dalin E."/>
            <person name="Tice H."/>
            <person name="Pitluck S."/>
            <person name="Bruce D."/>
            <person name="Goodwin L."/>
            <person name="Saunders E."/>
            <person name="Brettin T."/>
            <person name="Detter J.C."/>
            <person name="Han C."/>
            <person name="Schmutz J."/>
            <person name="Larimer F."/>
            <person name="Land M."/>
            <person name="Hauser L."/>
            <person name="Kyrpides N."/>
            <person name="Lykidis A."/>
            <person name="Hemme C."/>
            <person name="Fields M.W."/>
            <person name="He Z."/>
            <person name="Zhou J."/>
            <person name="Richardson P."/>
        </authorList>
    </citation>
    <scope>NUCLEOTIDE SEQUENCE [LARGE SCALE GENOMIC DNA]</scope>
    <source>
        <strain>ATCC 33223 / DSM 2355 / 39E</strain>
    </source>
</reference>
<dbReference type="EC" id="3.1.-.-" evidence="1"/>
<dbReference type="EMBL" id="CP000924">
    <property type="protein sequence ID" value="ABY95019.1"/>
    <property type="molecule type" value="Genomic_DNA"/>
</dbReference>
<dbReference type="RefSeq" id="WP_003867917.1">
    <property type="nucleotide sequence ID" value="NC_010321.1"/>
</dbReference>
<dbReference type="SMR" id="B0KA56"/>
<dbReference type="STRING" id="340099.Teth39_1367"/>
<dbReference type="KEGG" id="tpd:Teth39_1367"/>
<dbReference type="eggNOG" id="COG0319">
    <property type="taxonomic scope" value="Bacteria"/>
</dbReference>
<dbReference type="HOGENOM" id="CLU_106710_3_0_9"/>
<dbReference type="Proteomes" id="UP000002156">
    <property type="component" value="Chromosome"/>
</dbReference>
<dbReference type="GO" id="GO:0005737">
    <property type="term" value="C:cytoplasm"/>
    <property type="evidence" value="ECO:0007669"/>
    <property type="project" value="UniProtKB-SubCell"/>
</dbReference>
<dbReference type="GO" id="GO:0004222">
    <property type="term" value="F:metalloendopeptidase activity"/>
    <property type="evidence" value="ECO:0007669"/>
    <property type="project" value="InterPro"/>
</dbReference>
<dbReference type="GO" id="GO:0004521">
    <property type="term" value="F:RNA endonuclease activity"/>
    <property type="evidence" value="ECO:0007669"/>
    <property type="project" value="UniProtKB-UniRule"/>
</dbReference>
<dbReference type="GO" id="GO:0008270">
    <property type="term" value="F:zinc ion binding"/>
    <property type="evidence" value="ECO:0007669"/>
    <property type="project" value="UniProtKB-UniRule"/>
</dbReference>
<dbReference type="GO" id="GO:0006364">
    <property type="term" value="P:rRNA processing"/>
    <property type="evidence" value="ECO:0007669"/>
    <property type="project" value="UniProtKB-UniRule"/>
</dbReference>
<dbReference type="Gene3D" id="3.40.390.30">
    <property type="entry name" value="Metalloproteases ('zincins'), catalytic domain"/>
    <property type="match status" value="1"/>
</dbReference>
<dbReference type="HAMAP" id="MF_00009">
    <property type="entry name" value="Endoribonucl_YbeY"/>
    <property type="match status" value="1"/>
</dbReference>
<dbReference type="InterPro" id="IPR023091">
    <property type="entry name" value="MetalPrtase_cat_dom_sf_prd"/>
</dbReference>
<dbReference type="InterPro" id="IPR002036">
    <property type="entry name" value="YbeY"/>
</dbReference>
<dbReference type="InterPro" id="IPR020549">
    <property type="entry name" value="YbeY_CS"/>
</dbReference>
<dbReference type="NCBIfam" id="TIGR00043">
    <property type="entry name" value="rRNA maturation RNase YbeY"/>
    <property type="match status" value="1"/>
</dbReference>
<dbReference type="PANTHER" id="PTHR46986">
    <property type="entry name" value="ENDORIBONUCLEASE YBEY, CHLOROPLASTIC"/>
    <property type="match status" value="1"/>
</dbReference>
<dbReference type="PANTHER" id="PTHR46986:SF1">
    <property type="entry name" value="ENDORIBONUCLEASE YBEY, CHLOROPLASTIC"/>
    <property type="match status" value="1"/>
</dbReference>
<dbReference type="Pfam" id="PF02130">
    <property type="entry name" value="YbeY"/>
    <property type="match status" value="1"/>
</dbReference>
<dbReference type="SUPFAM" id="SSF55486">
    <property type="entry name" value="Metalloproteases ('zincins'), catalytic domain"/>
    <property type="match status" value="1"/>
</dbReference>
<dbReference type="PROSITE" id="PS01306">
    <property type="entry name" value="UPF0054"/>
    <property type="match status" value="1"/>
</dbReference>
<sequence>MNILIDNRQDKVDAINLEELVEKVIKTVLEVEEVIDNVEVSVSFVDNEEIRKLNKYYRGIDKPTDVLSFPLAEFEDTYGEVEEIEEDSEEVQPIGDIVISLEKALEQSMEYGHSFEREVAYLTAHSMLHLLGYDHETEEERKIMREKEEEVMARLNIGR</sequence>
<name>YBEY_THEP3</name>
<accession>B0KA56</accession>